<organism>
    <name type="scientific">Shewanella violacea (strain JCM 10179 / CIP 106290 / LMG 19151 / DSS12)</name>
    <dbReference type="NCBI Taxonomy" id="637905"/>
    <lineage>
        <taxon>Bacteria</taxon>
        <taxon>Pseudomonadati</taxon>
        <taxon>Pseudomonadota</taxon>
        <taxon>Gammaproteobacteria</taxon>
        <taxon>Alteromonadales</taxon>
        <taxon>Shewanellaceae</taxon>
        <taxon>Shewanella</taxon>
    </lineage>
</organism>
<protein>
    <recommendedName>
        <fullName>Cold shock-like protein CspG</fullName>
    </recommendedName>
</protein>
<sequence length="70" mass="7614">MSNSTTGLVKWFNEEKGFGFITQDNGGDDVFVHFRSITSDGFKTLAEGQKVSFEVEQGQKGLQAANVVAL</sequence>
<reference key="1">
    <citation type="journal article" date="1999" name="FEMS Microbiol. Lett.">
        <title>Cloning of two cold shock genes, cspA and cspG, from the deep-sea psychrophilic bacterium Shewanella violacea strain DSS12.</title>
        <authorList>
            <person name="Fujii S."/>
            <person name="Nakasone K."/>
            <person name="Horikoshi K."/>
        </authorList>
    </citation>
    <scope>NUCLEOTIDE SEQUENCE [GENOMIC DNA]</scope>
</reference>
<reference key="2">
    <citation type="journal article" date="2010" name="Mol. Biosyst.">
        <title>Complete genome sequence and comparative analysis of Shewanella violacea, a psychrophilic and piezophilic bacterium from deep sea floor sediments.</title>
        <authorList>
            <person name="Aono E."/>
            <person name="Baba T."/>
            <person name="Ara T."/>
            <person name="Nishi T."/>
            <person name="Nakamichi T."/>
            <person name="Inamoto E."/>
            <person name="Toyonaga H."/>
            <person name="Hasegawa M."/>
            <person name="Takai Y."/>
            <person name="Okumura Y."/>
            <person name="Baba M."/>
            <person name="Tomita M."/>
            <person name="Kato C."/>
            <person name="Oshima T."/>
            <person name="Nakasone K."/>
            <person name="Mori H."/>
        </authorList>
    </citation>
    <scope>NUCLEOTIDE SEQUENCE [LARGE SCALE GENOMIC DNA]</scope>
    <source>
        <strain>JCM 10179 / CIP 106290 / LMG 19151 / DSS12</strain>
    </source>
</reference>
<proteinExistence type="evidence at transcript level"/>
<keyword id="KW-0010">Activator</keyword>
<keyword id="KW-0963">Cytoplasm</keyword>
<keyword id="KW-0238">DNA-binding</keyword>
<keyword id="KW-1185">Reference proteome</keyword>
<keyword id="KW-0346">Stress response</keyword>
<keyword id="KW-0804">Transcription</keyword>
<keyword id="KW-0805">Transcription regulation</keyword>
<feature type="chain" id="PRO_0000100327" description="Cold shock-like protein CspG">
    <location>
        <begin position="1"/>
        <end position="70"/>
    </location>
</feature>
<feature type="domain" description="CSD">
    <location>
        <begin position="7"/>
        <end position="67"/>
    </location>
</feature>
<comment type="subcellular location">
    <subcellularLocation>
        <location evidence="1">Cytoplasm</location>
    </subcellularLocation>
</comment>
<comment type="induction">
    <text>By cold shock.</text>
</comment>
<dbReference type="EMBL" id="AB022716">
    <property type="protein sequence ID" value="BAA84218.1"/>
    <property type="molecule type" value="Genomic_DNA"/>
</dbReference>
<dbReference type="EMBL" id="AP011177">
    <property type="protein sequence ID" value="BAJ03487.1"/>
    <property type="molecule type" value="Genomic_DNA"/>
</dbReference>
<dbReference type="RefSeq" id="WP_013052780.1">
    <property type="nucleotide sequence ID" value="NC_014012.1"/>
</dbReference>
<dbReference type="SMR" id="Q9S170"/>
<dbReference type="STRING" id="637905.SVI_3516"/>
<dbReference type="KEGG" id="svo:SVI_3516"/>
<dbReference type="eggNOG" id="COG1278">
    <property type="taxonomic scope" value="Bacteria"/>
</dbReference>
<dbReference type="HOGENOM" id="CLU_117621_0_3_6"/>
<dbReference type="OrthoDB" id="9810590at2"/>
<dbReference type="Proteomes" id="UP000002350">
    <property type="component" value="Chromosome"/>
</dbReference>
<dbReference type="GO" id="GO:0005829">
    <property type="term" value="C:cytosol"/>
    <property type="evidence" value="ECO:0007669"/>
    <property type="project" value="UniProtKB-ARBA"/>
</dbReference>
<dbReference type="GO" id="GO:0003677">
    <property type="term" value="F:DNA binding"/>
    <property type="evidence" value="ECO:0007669"/>
    <property type="project" value="UniProtKB-KW"/>
</dbReference>
<dbReference type="CDD" id="cd04458">
    <property type="entry name" value="CSP_CDS"/>
    <property type="match status" value="1"/>
</dbReference>
<dbReference type="FunFam" id="2.40.50.140:FF:000006">
    <property type="entry name" value="Cold shock protein CspC"/>
    <property type="match status" value="1"/>
</dbReference>
<dbReference type="Gene3D" id="6.20.370.130">
    <property type="match status" value="1"/>
</dbReference>
<dbReference type="Gene3D" id="2.40.50.140">
    <property type="entry name" value="Nucleic acid-binding proteins"/>
    <property type="match status" value="1"/>
</dbReference>
<dbReference type="InterPro" id="IPR012156">
    <property type="entry name" value="Cold_shock_CspA"/>
</dbReference>
<dbReference type="InterPro" id="IPR011129">
    <property type="entry name" value="CSD"/>
</dbReference>
<dbReference type="InterPro" id="IPR019844">
    <property type="entry name" value="CSD_CS"/>
</dbReference>
<dbReference type="InterPro" id="IPR002059">
    <property type="entry name" value="CSP_DNA-bd"/>
</dbReference>
<dbReference type="InterPro" id="IPR012340">
    <property type="entry name" value="NA-bd_OB-fold"/>
</dbReference>
<dbReference type="PANTHER" id="PTHR46565">
    <property type="entry name" value="COLD SHOCK DOMAIN PROTEIN 2"/>
    <property type="match status" value="1"/>
</dbReference>
<dbReference type="PANTHER" id="PTHR46565:SF20">
    <property type="entry name" value="COLD SHOCK DOMAIN-CONTAINING PROTEIN 4"/>
    <property type="match status" value="1"/>
</dbReference>
<dbReference type="Pfam" id="PF00313">
    <property type="entry name" value="CSD"/>
    <property type="match status" value="1"/>
</dbReference>
<dbReference type="PIRSF" id="PIRSF002599">
    <property type="entry name" value="Cold_shock_A"/>
    <property type="match status" value="1"/>
</dbReference>
<dbReference type="PRINTS" id="PR00050">
    <property type="entry name" value="COLDSHOCK"/>
</dbReference>
<dbReference type="SMART" id="SM00357">
    <property type="entry name" value="CSP"/>
    <property type="match status" value="1"/>
</dbReference>
<dbReference type="SUPFAM" id="SSF50249">
    <property type="entry name" value="Nucleic acid-binding proteins"/>
    <property type="match status" value="1"/>
</dbReference>
<dbReference type="PROSITE" id="PS00352">
    <property type="entry name" value="CSD_1"/>
    <property type="match status" value="1"/>
</dbReference>
<dbReference type="PROSITE" id="PS51857">
    <property type="entry name" value="CSD_2"/>
    <property type="match status" value="1"/>
</dbReference>
<accession>Q9S170</accession>
<accession>D4ZBU2</accession>
<gene>
    <name type="primary">cspG</name>
    <name type="ordered locus">SVI_3516</name>
</gene>
<name>CSPG_SHEVD</name>
<evidence type="ECO:0000250" key="1"/>